<keyword id="KW-0204">Cytolysis</keyword>
<keyword id="KW-1061">Dermonecrotic toxin</keyword>
<keyword id="KW-1015">Disulfide bond</keyword>
<keyword id="KW-0354">Hemolysis</keyword>
<keyword id="KW-0442">Lipid degradation</keyword>
<keyword id="KW-0443">Lipid metabolism</keyword>
<keyword id="KW-0456">Lyase</keyword>
<keyword id="KW-0460">Magnesium</keyword>
<keyword id="KW-0479">Metal-binding</keyword>
<keyword id="KW-0964">Secreted</keyword>
<keyword id="KW-0800">Toxin</keyword>
<proteinExistence type="evidence at transcript level"/>
<accession>C0JB33</accession>
<reference key="1">
    <citation type="journal article" date="2009" name="Mol. Biol. Evol.">
        <title>Molecular evolution, functional variation, and proposed nomenclature of the gene family that includes sphingomyelinase D in sicariid spider venoms.</title>
        <authorList>
            <person name="Binford G.J."/>
            <person name="Bodner M.R."/>
            <person name="Cordes M.H."/>
            <person name="Baldwin K.L."/>
            <person name="Rynerson M.R."/>
            <person name="Burns S.N."/>
            <person name="Zobel-Thropp P.A."/>
        </authorList>
    </citation>
    <scope>NUCLEOTIDE SEQUENCE [MRNA]</scope>
    <scope>NOMENCLATURE</scope>
    <source>
        <tissue>Venom gland</tissue>
    </source>
</reference>
<organism>
    <name type="scientific">Sicarius peruensis</name>
    <name type="common">Six-eyed sand spider</name>
    <dbReference type="NCBI Taxonomy" id="571541"/>
    <lineage>
        <taxon>Eukaryota</taxon>
        <taxon>Metazoa</taxon>
        <taxon>Ecdysozoa</taxon>
        <taxon>Arthropoda</taxon>
        <taxon>Chelicerata</taxon>
        <taxon>Arachnida</taxon>
        <taxon>Araneae</taxon>
        <taxon>Araneomorphae</taxon>
        <taxon>Haplogynae</taxon>
        <taxon>Scytodoidea</taxon>
        <taxon>Sicariidae</taxon>
        <taxon>Sicarius</taxon>
    </lineage>
</organism>
<sequence length="269" mass="30720">WIMGHMVNDLKLADEFLNDGANSLELDVEFSSSGTAQRTHHGIPCDCFRYCTNSEKFSTYLDYIRQLTTPGNSKFRSRLILLVMDLKLNPLSNRAAYYAGAGVALNLLNHYWQRGESEARAYIVLSLSTIGRADFISGFKNTMEKEGFADKYYDKIGWDFSGNENLQLIRNIFKIYGIREHIWQGDGITNCLPRGDSRLKEALNLRYSPSYVYADKVYTWSIDKESSIENALRLGVDGVMTNHPERLIEVLGKGKYSDKFRLATYDDNP</sequence>
<comment type="function">
    <text evidence="1 3">Dermonecrotic toxins cleave the phosphodiester linkage between the phosphate and headgroup of certain phospholipids (sphingolipid and lysolipid substrates), forming an alcohol (often choline) and a cyclic phosphate (By similarity). This toxin acts on sphingomyelin (SM) (By similarity). It may also act on ceramide phosphoethanolamine (CPE), lysophosphatidylcholine (LPC) and lysophosphatidylethanolamine (LPE), but not on lysophosphatidylserine (LPS), and lysophosphatidylglycerol (LPG) (By similarity). It acts by transphosphatidylation, releasing exclusively cyclic phosphate products as second products (By similarity). Induces dermonecrosis, hemolysis, increased vascular permeability, edema, inflammatory response, and platelet aggregation (By similarity).</text>
</comment>
<comment type="catalytic activity">
    <reaction evidence="1">
        <text>an N-(acyl)-sphingosylphosphocholine = an N-(acyl)-sphingosyl-1,3-cyclic phosphate + choline</text>
        <dbReference type="Rhea" id="RHEA:60652"/>
        <dbReference type="ChEBI" id="CHEBI:15354"/>
        <dbReference type="ChEBI" id="CHEBI:64583"/>
        <dbReference type="ChEBI" id="CHEBI:143892"/>
    </reaction>
</comment>
<comment type="catalytic activity">
    <reaction evidence="1">
        <text>an N-(acyl)-sphingosylphosphoethanolamine = an N-(acyl)-sphingosyl-1,3-cyclic phosphate + ethanolamine</text>
        <dbReference type="Rhea" id="RHEA:60648"/>
        <dbReference type="ChEBI" id="CHEBI:57603"/>
        <dbReference type="ChEBI" id="CHEBI:143891"/>
        <dbReference type="ChEBI" id="CHEBI:143892"/>
    </reaction>
</comment>
<comment type="catalytic activity">
    <reaction evidence="1">
        <text>a 1-acyl-sn-glycero-3-phosphocholine = a 1-acyl-sn-glycero-2,3-cyclic phosphate + choline</text>
        <dbReference type="Rhea" id="RHEA:60700"/>
        <dbReference type="ChEBI" id="CHEBI:15354"/>
        <dbReference type="ChEBI" id="CHEBI:58168"/>
        <dbReference type="ChEBI" id="CHEBI:143947"/>
    </reaction>
</comment>
<comment type="catalytic activity">
    <reaction evidence="1">
        <text>a 1-acyl-sn-glycero-3-phosphoethanolamine = a 1-acyl-sn-glycero-2,3-cyclic phosphate + ethanolamine</text>
        <dbReference type="Rhea" id="RHEA:60704"/>
        <dbReference type="ChEBI" id="CHEBI:57603"/>
        <dbReference type="ChEBI" id="CHEBI:64381"/>
        <dbReference type="ChEBI" id="CHEBI:143947"/>
    </reaction>
</comment>
<comment type="cofactor">
    <cofactor evidence="5">
        <name>Mg(2+)</name>
        <dbReference type="ChEBI" id="CHEBI:18420"/>
    </cofactor>
    <text evidence="5">Binds 1 Mg(2+) ion per subunit.</text>
</comment>
<comment type="subcellular location">
    <subcellularLocation>
        <location evidence="8">Secreted</location>
    </subcellularLocation>
</comment>
<comment type="tissue specificity">
    <text evidence="8">Expressed by the venom gland.</text>
</comment>
<comment type="similarity">
    <text evidence="7">Belongs to the arthropod phospholipase D family. Class II subfamily.</text>
</comment>
<comment type="caution">
    <text evidence="1 2 4">The most common activity assay for dermonecrotic toxins detects enzymatic activity by monitoring choline release from substrate. Liberation of choline from sphingomyelin (SM) or lysophosphatidylcholine (LPC) is commonly assumed to result from substrate hydrolysis, giving either ceramide-1-phosphate (C1P) or lysophosphatidic acid (LPA), respectively, as a second product. However, two studies from Lajoie and colleagues (2013 and 2015) report the observation of exclusive formation of cyclic phosphate products as second products, resulting from intramolecular transphosphatidylation. Cyclic phosphates have vastly different biological properties from their monoester counterparts, and they may be relevant to the pathology of brown spider envenomation.</text>
</comment>
<protein>
    <recommendedName>
        <fullName evidence="6">Dermonecrotic toxin SpeSicTox-betaIB3</fullName>
        <ecNumber evidence="4">4.6.1.-</ecNumber>
    </recommendedName>
    <alternativeName>
        <fullName>Phospholipase D</fullName>
        <shortName>PLD</shortName>
    </alternativeName>
    <alternativeName>
        <fullName>Sphingomyelin phosphodiesterase D</fullName>
        <shortName>SMD</shortName>
        <shortName>SMase D</shortName>
        <shortName>Sphingomyelinase D</shortName>
    </alternativeName>
</protein>
<evidence type="ECO:0000250" key="1">
    <source>
        <dbReference type="UniProtKB" id="A0A0D4WTV1"/>
    </source>
</evidence>
<evidence type="ECO:0000250" key="2">
    <source>
        <dbReference type="UniProtKB" id="A0A0D4WV12"/>
    </source>
</evidence>
<evidence type="ECO:0000250" key="3">
    <source>
        <dbReference type="UniProtKB" id="P0CE80"/>
    </source>
</evidence>
<evidence type="ECO:0000250" key="4">
    <source>
        <dbReference type="UniProtKB" id="Q4ZFU2"/>
    </source>
</evidence>
<evidence type="ECO:0000250" key="5">
    <source>
        <dbReference type="UniProtKB" id="Q8I914"/>
    </source>
</evidence>
<evidence type="ECO:0000303" key="6">
    <source>
    </source>
</evidence>
<evidence type="ECO:0000305" key="7"/>
<evidence type="ECO:0000305" key="8">
    <source>
    </source>
</evidence>
<name>B1M_SICPE</name>
<feature type="chain" id="PRO_0000392852" description="Dermonecrotic toxin SpeSicTox-betaIB3">
    <location>
        <begin position="1" status="less than"/>
        <end position="269"/>
    </location>
</feature>
<feature type="active site" evidence="5">
    <location>
        <position position="5"/>
    </location>
</feature>
<feature type="active site" description="Nucleophile" evidence="5">
    <location>
        <position position="41"/>
    </location>
</feature>
<feature type="binding site" evidence="5">
    <location>
        <position position="25"/>
    </location>
    <ligand>
        <name>Mg(2+)</name>
        <dbReference type="ChEBI" id="CHEBI:18420"/>
    </ligand>
</feature>
<feature type="binding site" evidence="5">
    <location>
        <position position="27"/>
    </location>
    <ligand>
        <name>Mg(2+)</name>
        <dbReference type="ChEBI" id="CHEBI:18420"/>
    </ligand>
</feature>
<feature type="binding site" evidence="5">
    <location>
        <position position="85"/>
    </location>
    <ligand>
        <name>Mg(2+)</name>
        <dbReference type="ChEBI" id="CHEBI:18420"/>
    </ligand>
</feature>
<feature type="disulfide bond" evidence="3">
    <location>
        <begin position="45"/>
        <end position="51"/>
    </location>
</feature>
<feature type="disulfide bond" evidence="3">
    <location>
        <begin position="47"/>
        <end position="191"/>
    </location>
</feature>
<feature type="non-terminal residue">
    <location>
        <position position="1"/>
    </location>
</feature>
<dbReference type="EC" id="4.6.1.-" evidence="4"/>
<dbReference type="EMBL" id="FJ171468">
    <property type="protein sequence ID" value="ACN48964.1"/>
    <property type="molecule type" value="mRNA"/>
</dbReference>
<dbReference type="SMR" id="C0JB33"/>
<dbReference type="GO" id="GO:0005576">
    <property type="term" value="C:extracellular region"/>
    <property type="evidence" value="ECO:0007669"/>
    <property type="project" value="UniProtKB-SubCell"/>
</dbReference>
<dbReference type="GO" id="GO:0016829">
    <property type="term" value="F:lyase activity"/>
    <property type="evidence" value="ECO:0007669"/>
    <property type="project" value="UniProtKB-KW"/>
</dbReference>
<dbReference type="GO" id="GO:0046872">
    <property type="term" value="F:metal ion binding"/>
    <property type="evidence" value="ECO:0007669"/>
    <property type="project" value="UniProtKB-KW"/>
</dbReference>
<dbReference type="GO" id="GO:0008081">
    <property type="term" value="F:phosphoric diester hydrolase activity"/>
    <property type="evidence" value="ECO:0007669"/>
    <property type="project" value="InterPro"/>
</dbReference>
<dbReference type="GO" id="GO:0090729">
    <property type="term" value="F:toxin activity"/>
    <property type="evidence" value="ECO:0007669"/>
    <property type="project" value="UniProtKB-KW"/>
</dbReference>
<dbReference type="GO" id="GO:0031640">
    <property type="term" value="P:killing of cells of another organism"/>
    <property type="evidence" value="ECO:0007669"/>
    <property type="project" value="UniProtKB-KW"/>
</dbReference>
<dbReference type="GO" id="GO:0016042">
    <property type="term" value="P:lipid catabolic process"/>
    <property type="evidence" value="ECO:0007669"/>
    <property type="project" value="UniProtKB-KW"/>
</dbReference>
<dbReference type="CDD" id="cd08576">
    <property type="entry name" value="GDPD_like_SMaseD_PLD"/>
    <property type="match status" value="1"/>
</dbReference>
<dbReference type="Gene3D" id="3.20.20.190">
    <property type="entry name" value="Phosphatidylinositol (PI) phosphodiesterase"/>
    <property type="match status" value="1"/>
</dbReference>
<dbReference type="InterPro" id="IPR017946">
    <property type="entry name" value="PLC-like_Pdiesterase_TIM-brl"/>
</dbReference>
<dbReference type="Pfam" id="PF13653">
    <property type="entry name" value="GDPD_2"/>
    <property type="match status" value="1"/>
</dbReference>
<dbReference type="SUPFAM" id="SSF51695">
    <property type="entry name" value="PLC-like phosphodiesterases"/>
    <property type="match status" value="1"/>
</dbReference>